<organism>
    <name type="scientific">Cereibacter sphaeroides (strain ATCC 17029 / ATH 2.4.9)</name>
    <name type="common">Rhodobacter sphaeroides</name>
    <dbReference type="NCBI Taxonomy" id="349101"/>
    <lineage>
        <taxon>Bacteria</taxon>
        <taxon>Pseudomonadati</taxon>
        <taxon>Pseudomonadota</taxon>
        <taxon>Alphaproteobacteria</taxon>
        <taxon>Rhodobacterales</taxon>
        <taxon>Paracoccaceae</taxon>
        <taxon>Cereibacter</taxon>
    </lineage>
</organism>
<name>SELO_CERS1</name>
<accession>A3PII0</accession>
<keyword id="KW-0067">ATP-binding</keyword>
<keyword id="KW-0460">Magnesium</keyword>
<keyword id="KW-0464">Manganese</keyword>
<keyword id="KW-0479">Metal-binding</keyword>
<keyword id="KW-0547">Nucleotide-binding</keyword>
<keyword id="KW-0548">Nucleotidyltransferase</keyword>
<keyword id="KW-0808">Transferase</keyword>
<reference key="1">
    <citation type="submission" date="2007-02" db="EMBL/GenBank/DDBJ databases">
        <title>Complete sequence of chromosome 1 of Rhodobacter sphaeroides ATCC 17029.</title>
        <authorList>
            <person name="Copeland A."/>
            <person name="Lucas S."/>
            <person name="Lapidus A."/>
            <person name="Barry K."/>
            <person name="Detter J.C."/>
            <person name="Glavina del Rio T."/>
            <person name="Hammon N."/>
            <person name="Israni S."/>
            <person name="Dalin E."/>
            <person name="Tice H."/>
            <person name="Pitluck S."/>
            <person name="Kiss H."/>
            <person name="Brettin T."/>
            <person name="Bruce D."/>
            <person name="Han C."/>
            <person name="Tapia R."/>
            <person name="Gilna P."/>
            <person name="Schmutz J."/>
            <person name="Larimer F."/>
            <person name="Land M."/>
            <person name="Hauser L."/>
            <person name="Kyrpides N."/>
            <person name="Mikhailova N."/>
            <person name="Richardson P."/>
            <person name="Mackenzie C."/>
            <person name="Choudhary M."/>
            <person name="Donohue T.J."/>
            <person name="Kaplan S."/>
        </authorList>
    </citation>
    <scope>NUCLEOTIDE SEQUENCE [LARGE SCALE GENOMIC DNA]</scope>
    <source>
        <strain>ATCC 17029 / ATH 2.4.9</strain>
    </source>
</reference>
<comment type="function">
    <text evidence="1">Nucleotidyltransferase involved in the post-translational modification of proteins. It can catalyze the addition of adenosine monophosphate (AMP) or uridine monophosphate (UMP) to a protein, resulting in modifications known as AMPylation and UMPylation.</text>
</comment>
<comment type="catalytic activity">
    <reaction evidence="1">
        <text>L-seryl-[protein] + ATP = 3-O-(5'-adenylyl)-L-seryl-[protein] + diphosphate</text>
        <dbReference type="Rhea" id="RHEA:58120"/>
        <dbReference type="Rhea" id="RHEA-COMP:9863"/>
        <dbReference type="Rhea" id="RHEA-COMP:15073"/>
        <dbReference type="ChEBI" id="CHEBI:29999"/>
        <dbReference type="ChEBI" id="CHEBI:30616"/>
        <dbReference type="ChEBI" id="CHEBI:33019"/>
        <dbReference type="ChEBI" id="CHEBI:142516"/>
        <dbReference type="EC" id="2.7.7.108"/>
    </reaction>
</comment>
<comment type="catalytic activity">
    <reaction evidence="1">
        <text>L-threonyl-[protein] + ATP = 3-O-(5'-adenylyl)-L-threonyl-[protein] + diphosphate</text>
        <dbReference type="Rhea" id="RHEA:54292"/>
        <dbReference type="Rhea" id="RHEA-COMP:11060"/>
        <dbReference type="Rhea" id="RHEA-COMP:13847"/>
        <dbReference type="ChEBI" id="CHEBI:30013"/>
        <dbReference type="ChEBI" id="CHEBI:30616"/>
        <dbReference type="ChEBI" id="CHEBI:33019"/>
        <dbReference type="ChEBI" id="CHEBI:138113"/>
        <dbReference type="EC" id="2.7.7.108"/>
    </reaction>
</comment>
<comment type="catalytic activity">
    <reaction evidence="1">
        <text>L-tyrosyl-[protein] + ATP = O-(5'-adenylyl)-L-tyrosyl-[protein] + diphosphate</text>
        <dbReference type="Rhea" id="RHEA:54288"/>
        <dbReference type="Rhea" id="RHEA-COMP:10136"/>
        <dbReference type="Rhea" id="RHEA-COMP:13846"/>
        <dbReference type="ChEBI" id="CHEBI:30616"/>
        <dbReference type="ChEBI" id="CHEBI:33019"/>
        <dbReference type="ChEBI" id="CHEBI:46858"/>
        <dbReference type="ChEBI" id="CHEBI:83624"/>
        <dbReference type="EC" id="2.7.7.108"/>
    </reaction>
</comment>
<comment type="catalytic activity">
    <reaction evidence="1">
        <text>L-histidyl-[protein] + UTP = N(tele)-(5'-uridylyl)-L-histidyl-[protein] + diphosphate</text>
        <dbReference type="Rhea" id="RHEA:83891"/>
        <dbReference type="Rhea" id="RHEA-COMP:9745"/>
        <dbReference type="Rhea" id="RHEA-COMP:20239"/>
        <dbReference type="ChEBI" id="CHEBI:29979"/>
        <dbReference type="ChEBI" id="CHEBI:33019"/>
        <dbReference type="ChEBI" id="CHEBI:46398"/>
        <dbReference type="ChEBI" id="CHEBI:233474"/>
    </reaction>
</comment>
<comment type="catalytic activity">
    <reaction evidence="1">
        <text>L-seryl-[protein] + UTP = O-(5'-uridylyl)-L-seryl-[protein] + diphosphate</text>
        <dbReference type="Rhea" id="RHEA:64604"/>
        <dbReference type="Rhea" id="RHEA-COMP:9863"/>
        <dbReference type="Rhea" id="RHEA-COMP:16635"/>
        <dbReference type="ChEBI" id="CHEBI:29999"/>
        <dbReference type="ChEBI" id="CHEBI:33019"/>
        <dbReference type="ChEBI" id="CHEBI:46398"/>
        <dbReference type="ChEBI" id="CHEBI:156051"/>
    </reaction>
</comment>
<comment type="catalytic activity">
    <reaction evidence="1">
        <text>L-tyrosyl-[protein] + UTP = O-(5'-uridylyl)-L-tyrosyl-[protein] + diphosphate</text>
        <dbReference type="Rhea" id="RHEA:83887"/>
        <dbReference type="Rhea" id="RHEA-COMP:10136"/>
        <dbReference type="Rhea" id="RHEA-COMP:20238"/>
        <dbReference type="ChEBI" id="CHEBI:33019"/>
        <dbReference type="ChEBI" id="CHEBI:46398"/>
        <dbReference type="ChEBI" id="CHEBI:46858"/>
        <dbReference type="ChEBI" id="CHEBI:90602"/>
    </reaction>
</comment>
<comment type="cofactor">
    <cofactor evidence="1">
        <name>Mg(2+)</name>
        <dbReference type="ChEBI" id="CHEBI:18420"/>
    </cofactor>
    <cofactor evidence="1">
        <name>Mn(2+)</name>
        <dbReference type="ChEBI" id="CHEBI:29035"/>
    </cofactor>
</comment>
<comment type="similarity">
    <text evidence="1">Belongs to the SELO family.</text>
</comment>
<evidence type="ECO:0000255" key="1">
    <source>
        <dbReference type="HAMAP-Rule" id="MF_00692"/>
    </source>
</evidence>
<gene>
    <name evidence="1" type="primary">ydiU</name>
    <name evidence="1" type="synonym">selO</name>
    <name type="ordered locus">Rsph17029_1035</name>
</gene>
<sequence>MTFRFDNSYARDLEGFYVDWPAAPVPAPRLLRLNRPLAEELGLDPDLLEREGAEIFSGRRLPEGAHPLAQAYAGHQFGGFSPQLGDGRALLIGEITDRAGRRRDLQLKGSGRTPFSRGADGKAALGPVLREYLVGEAMHGLGIPTTRALAAVATGEPLLRQEGERPGAILTRVAASHIRVGTFQFFAARSDIERVRRLADYAIARHYPELASAPEPYLAFYEAVAEAQAQLVARWMLVGFIHGVMNTDNMTISGETIDYGPCAFMEGYDPGTVFSSIDLQGRYAYGNQPFILAWNLARLGEALLPLLDADAERAADKANSVLETVGARYQGHWLAGMRAKLGLSGAEEGDARLAEDLLEAMRSQRADWTLTFRRLADAVTDEGALRPLFRDGSALEAWLPRWRDRLAPDAAQRMRATNPIYIARNHRVEEALAAAHAGDLAPFDRLLEALAEPFTERADRELFALPAPEGFDDSYRTFCGT</sequence>
<feature type="chain" id="PRO_1000045254" description="Protein nucleotidyltransferase YdiU">
    <location>
        <begin position="1"/>
        <end position="481"/>
    </location>
</feature>
<feature type="active site" description="Proton acceptor" evidence="1">
    <location>
        <position position="248"/>
    </location>
</feature>
<feature type="binding site" evidence="1">
    <location>
        <position position="85"/>
    </location>
    <ligand>
        <name>ATP</name>
        <dbReference type="ChEBI" id="CHEBI:30616"/>
    </ligand>
</feature>
<feature type="binding site" evidence="1">
    <location>
        <position position="87"/>
    </location>
    <ligand>
        <name>ATP</name>
        <dbReference type="ChEBI" id="CHEBI:30616"/>
    </ligand>
</feature>
<feature type="binding site" evidence="1">
    <location>
        <position position="88"/>
    </location>
    <ligand>
        <name>ATP</name>
        <dbReference type="ChEBI" id="CHEBI:30616"/>
    </ligand>
</feature>
<feature type="binding site" evidence="1">
    <location>
        <position position="108"/>
    </location>
    <ligand>
        <name>ATP</name>
        <dbReference type="ChEBI" id="CHEBI:30616"/>
    </ligand>
</feature>
<feature type="binding site" evidence="1">
    <location>
        <position position="120"/>
    </location>
    <ligand>
        <name>ATP</name>
        <dbReference type="ChEBI" id="CHEBI:30616"/>
    </ligand>
</feature>
<feature type="binding site" evidence="1">
    <location>
        <position position="121"/>
    </location>
    <ligand>
        <name>ATP</name>
        <dbReference type="ChEBI" id="CHEBI:30616"/>
    </ligand>
</feature>
<feature type="binding site" evidence="1">
    <location>
        <position position="172"/>
    </location>
    <ligand>
        <name>ATP</name>
        <dbReference type="ChEBI" id="CHEBI:30616"/>
    </ligand>
</feature>
<feature type="binding site" evidence="1">
    <location>
        <position position="179"/>
    </location>
    <ligand>
        <name>ATP</name>
        <dbReference type="ChEBI" id="CHEBI:30616"/>
    </ligand>
</feature>
<feature type="binding site" evidence="1">
    <location>
        <position position="249"/>
    </location>
    <ligand>
        <name>Mg(2+)</name>
        <dbReference type="ChEBI" id="CHEBI:18420"/>
    </ligand>
</feature>
<feature type="binding site" evidence="1">
    <location>
        <position position="258"/>
    </location>
    <ligand>
        <name>ATP</name>
        <dbReference type="ChEBI" id="CHEBI:30616"/>
    </ligand>
</feature>
<feature type="binding site" evidence="1">
    <location>
        <position position="258"/>
    </location>
    <ligand>
        <name>Mg(2+)</name>
        <dbReference type="ChEBI" id="CHEBI:18420"/>
    </ligand>
</feature>
<proteinExistence type="inferred from homology"/>
<dbReference type="EC" id="2.7.7.-" evidence="1"/>
<dbReference type="EC" id="2.7.7.108" evidence="1"/>
<dbReference type="EMBL" id="CP000577">
    <property type="protein sequence ID" value="ABN76146.1"/>
    <property type="molecule type" value="Genomic_DNA"/>
</dbReference>
<dbReference type="RefSeq" id="WP_011840758.1">
    <property type="nucleotide sequence ID" value="NC_009049.1"/>
</dbReference>
<dbReference type="SMR" id="A3PII0"/>
<dbReference type="KEGG" id="rsh:Rsph17029_1035"/>
<dbReference type="HOGENOM" id="CLU_010245_4_1_5"/>
<dbReference type="GO" id="GO:0070733">
    <property type="term" value="F:AMPylase activity"/>
    <property type="evidence" value="ECO:0007669"/>
    <property type="project" value="TreeGrafter"/>
</dbReference>
<dbReference type="GO" id="GO:0005524">
    <property type="term" value="F:ATP binding"/>
    <property type="evidence" value="ECO:0007669"/>
    <property type="project" value="UniProtKB-UniRule"/>
</dbReference>
<dbReference type="GO" id="GO:0000287">
    <property type="term" value="F:magnesium ion binding"/>
    <property type="evidence" value="ECO:0007669"/>
    <property type="project" value="UniProtKB-UniRule"/>
</dbReference>
<dbReference type="HAMAP" id="MF_00692">
    <property type="entry name" value="YdiU_SelO"/>
    <property type="match status" value="1"/>
</dbReference>
<dbReference type="InterPro" id="IPR003846">
    <property type="entry name" value="SelO"/>
</dbReference>
<dbReference type="NCBIfam" id="NF000658">
    <property type="entry name" value="PRK00029.1"/>
    <property type="match status" value="1"/>
</dbReference>
<dbReference type="PANTHER" id="PTHR32057">
    <property type="entry name" value="PROTEIN ADENYLYLTRANSFERASE SELO, MITOCHONDRIAL"/>
    <property type="match status" value="1"/>
</dbReference>
<dbReference type="PANTHER" id="PTHR32057:SF14">
    <property type="entry name" value="PROTEIN ADENYLYLTRANSFERASE SELO, MITOCHONDRIAL"/>
    <property type="match status" value="1"/>
</dbReference>
<dbReference type="Pfam" id="PF02696">
    <property type="entry name" value="SelO"/>
    <property type="match status" value="1"/>
</dbReference>
<protein>
    <recommendedName>
        <fullName evidence="1">Protein nucleotidyltransferase YdiU</fullName>
        <ecNumber evidence="1">2.7.7.-</ecNumber>
    </recommendedName>
    <alternativeName>
        <fullName evidence="1">Protein adenylyltransferase YdiU</fullName>
        <ecNumber evidence="1">2.7.7.108</ecNumber>
    </alternativeName>
    <alternativeName>
        <fullName evidence="1">Protein uridylyltransferase YdiU</fullName>
        <ecNumber evidence="1">2.7.7.-</ecNumber>
    </alternativeName>
</protein>